<accession>B1LKM1</accession>
<keyword id="KW-0012">Acyltransferase</keyword>
<keyword id="KW-0963">Cytoplasm</keyword>
<keyword id="KW-0808">Transferase</keyword>
<evidence type="ECO:0000255" key="1">
    <source>
        <dbReference type="HAMAP-Rule" id="MF_00013"/>
    </source>
</evidence>
<evidence type="ECO:0000255" key="2">
    <source>
        <dbReference type="PROSITE-ProRule" id="PRU01067"/>
    </source>
</evidence>
<name>LIPB_ECOSM</name>
<proteinExistence type="inferred from homology"/>
<gene>
    <name evidence="1" type="primary">lipB</name>
    <name type="ordered locus">EcSMS35_0650</name>
</gene>
<organism>
    <name type="scientific">Escherichia coli (strain SMS-3-5 / SECEC)</name>
    <dbReference type="NCBI Taxonomy" id="439855"/>
    <lineage>
        <taxon>Bacteria</taxon>
        <taxon>Pseudomonadati</taxon>
        <taxon>Pseudomonadota</taxon>
        <taxon>Gammaproteobacteria</taxon>
        <taxon>Enterobacterales</taxon>
        <taxon>Enterobacteriaceae</taxon>
        <taxon>Escherichia</taxon>
    </lineage>
</organism>
<feature type="chain" id="PRO_1000116284" description="Octanoyltransferase">
    <location>
        <begin position="1"/>
        <end position="213"/>
    </location>
</feature>
<feature type="domain" description="BPL/LPL catalytic" evidence="2">
    <location>
        <begin position="32"/>
        <end position="207"/>
    </location>
</feature>
<feature type="active site" description="Acyl-thioester intermediate" evidence="1">
    <location>
        <position position="169"/>
    </location>
</feature>
<feature type="binding site" evidence="1">
    <location>
        <begin position="71"/>
        <end position="78"/>
    </location>
    <ligand>
        <name>substrate</name>
    </ligand>
</feature>
<feature type="binding site" evidence="1">
    <location>
        <begin position="138"/>
        <end position="140"/>
    </location>
    <ligand>
        <name>substrate</name>
    </ligand>
</feature>
<feature type="binding site" evidence="1">
    <location>
        <begin position="151"/>
        <end position="153"/>
    </location>
    <ligand>
        <name>substrate</name>
    </ligand>
</feature>
<feature type="site" description="Lowers pKa of active site Cys" evidence="1">
    <location>
        <position position="135"/>
    </location>
</feature>
<dbReference type="EC" id="2.3.1.181" evidence="1"/>
<dbReference type="EMBL" id="CP000970">
    <property type="protein sequence ID" value="ACB19770.1"/>
    <property type="molecule type" value="Genomic_DNA"/>
</dbReference>
<dbReference type="RefSeq" id="WP_000284018.1">
    <property type="nucleotide sequence ID" value="NC_010498.1"/>
</dbReference>
<dbReference type="SMR" id="B1LKM1"/>
<dbReference type="KEGG" id="ecm:EcSMS35_0650"/>
<dbReference type="HOGENOM" id="CLU_035168_3_1_6"/>
<dbReference type="UniPathway" id="UPA00538">
    <property type="reaction ID" value="UER00592"/>
</dbReference>
<dbReference type="Proteomes" id="UP000007011">
    <property type="component" value="Chromosome"/>
</dbReference>
<dbReference type="GO" id="GO:0005737">
    <property type="term" value="C:cytoplasm"/>
    <property type="evidence" value="ECO:0007669"/>
    <property type="project" value="UniProtKB-SubCell"/>
</dbReference>
<dbReference type="GO" id="GO:0033819">
    <property type="term" value="F:lipoyl(octanoyl) transferase activity"/>
    <property type="evidence" value="ECO:0007669"/>
    <property type="project" value="UniProtKB-EC"/>
</dbReference>
<dbReference type="GO" id="GO:0036211">
    <property type="term" value="P:protein modification process"/>
    <property type="evidence" value="ECO:0007669"/>
    <property type="project" value="InterPro"/>
</dbReference>
<dbReference type="CDD" id="cd16444">
    <property type="entry name" value="LipB"/>
    <property type="match status" value="1"/>
</dbReference>
<dbReference type="FunFam" id="3.30.930.10:FF:000020">
    <property type="entry name" value="Octanoyltransferase"/>
    <property type="match status" value="1"/>
</dbReference>
<dbReference type="Gene3D" id="3.30.930.10">
    <property type="entry name" value="Bira Bifunctional Protein, Domain 2"/>
    <property type="match status" value="1"/>
</dbReference>
<dbReference type="HAMAP" id="MF_00013">
    <property type="entry name" value="LipB"/>
    <property type="match status" value="1"/>
</dbReference>
<dbReference type="InterPro" id="IPR045864">
    <property type="entry name" value="aa-tRNA-synth_II/BPL/LPL"/>
</dbReference>
<dbReference type="InterPro" id="IPR004143">
    <property type="entry name" value="BPL_LPL_catalytic"/>
</dbReference>
<dbReference type="InterPro" id="IPR000544">
    <property type="entry name" value="Octanoyltransferase"/>
</dbReference>
<dbReference type="InterPro" id="IPR020605">
    <property type="entry name" value="Octanoyltransferase_CS"/>
</dbReference>
<dbReference type="NCBIfam" id="TIGR00214">
    <property type="entry name" value="lipB"/>
    <property type="match status" value="1"/>
</dbReference>
<dbReference type="NCBIfam" id="NF010922">
    <property type="entry name" value="PRK14342.1"/>
    <property type="match status" value="1"/>
</dbReference>
<dbReference type="PANTHER" id="PTHR10993:SF7">
    <property type="entry name" value="LIPOYLTRANSFERASE 2, MITOCHONDRIAL-RELATED"/>
    <property type="match status" value="1"/>
</dbReference>
<dbReference type="PANTHER" id="PTHR10993">
    <property type="entry name" value="OCTANOYLTRANSFERASE"/>
    <property type="match status" value="1"/>
</dbReference>
<dbReference type="Pfam" id="PF21948">
    <property type="entry name" value="LplA-B_cat"/>
    <property type="match status" value="1"/>
</dbReference>
<dbReference type="PIRSF" id="PIRSF016262">
    <property type="entry name" value="LPLase"/>
    <property type="match status" value="1"/>
</dbReference>
<dbReference type="SUPFAM" id="SSF55681">
    <property type="entry name" value="Class II aaRS and biotin synthetases"/>
    <property type="match status" value="1"/>
</dbReference>
<dbReference type="PROSITE" id="PS51733">
    <property type="entry name" value="BPL_LPL_CATALYTIC"/>
    <property type="match status" value="1"/>
</dbReference>
<dbReference type="PROSITE" id="PS01313">
    <property type="entry name" value="LIPB"/>
    <property type="match status" value="1"/>
</dbReference>
<protein>
    <recommendedName>
        <fullName evidence="1">Octanoyltransferase</fullName>
        <ecNumber evidence="1">2.3.1.181</ecNumber>
    </recommendedName>
    <alternativeName>
        <fullName evidence="1">Lipoate-protein ligase B</fullName>
    </alternativeName>
    <alternativeName>
        <fullName evidence="1">Lipoyl/octanoyl transferase</fullName>
    </alternativeName>
    <alternativeName>
        <fullName evidence="1">Octanoyl-[acyl-carrier-protein]-protein N-octanoyltransferase</fullName>
    </alternativeName>
</protein>
<comment type="function">
    <text evidence="1">Catalyzes the transfer of endogenously produced octanoic acid from octanoyl-acyl-carrier-protein onto the lipoyl domains of lipoate-dependent enzymes. Lipoyl-ACP can also act as a substrate although octanoyl-ACP is likely to be the physiological substrate.</text>
</comment>
<comment type="catalytic activity">
    <reaction evidence="1">
        <text>octanoyl-[ACP] + L-lysyl-[protein] = N(6)-octanoyl-L-lysyl-[protein] + holo-[ACP] + H(+)</text>
        <dbReference type="Rhea" id="RHEA:17665"/>
        <dbReference type="Rhea" id="RHEA-COMP:9636"/>
        <dbReference type="Rhea" id="RHEA-COMP:9685"/>
        <dbReference type="Rhea" id="RHEA-COMP:9752"/>
        <dbReference type="Rhea" id="RHEA-COMP:9928"/>
        <dbReference type="ChEBI" id="CHEBI:15378"/>
        <dbReference type="ChEBI" id="CHEBI:29969"/>
        <dbReference type="ChEBI" id="CHEBI:64479"/>
        <dbReference type="ChEBI" id="CHEBI:78463"/>
        <dbReference type="ChEBI" id="CHEBI:78809"/>
        <dbReference type="EC" id="2.3.1.181"/>
    </reaction>
</comment>
<comment type="pathway">
    <text evidence="1">Protein modification; protein lipoylation via endogenous pathway; protein N(6)-(lipoyl)lysine from octanoyl-[acyl-carrier-protein]: step 1/2.</text>
</comment>
<comment type="subcellular location">
    <subcellularLocation>
        <location evidence="1">Cytoplasm</location>
    </subcellularLocation>
</comment>
<comment type="miscellaneous">
    <text evidence="1">In the reaction, the free carboxyl group of octanoic acid is attached via an amide linkage to the epsilon-amino group of a specific lysine residue of lipoyl domains of lipoate-dependent enzymes.</text>
</comment>
<comment type="similarity">
    <text evidence="1">Belongs to the LipB family.</text>
</comment>
<reference key="1">
    <citation type="journal article" date="2008" name="J. Bacteriol.">
        <title>Insights into the environmental resistance gene pool from the genome sequence of the multidrug-resistant environmental isolate Escherichia coli SMS-3-5.</title>
        <authorList>
            <person name="Fricke W.F."/>
            <person name="Wright M.S."/>
            <person name="Lindell A.H."/>
            <person name="Harkins D.M."/>
            <person name="Baker-Austin C."/>
            <person name="Ravel J."/>
            <person name="Stepanauskas R."/>
        </authorList>
    </citation>
    <scope>NUCLEOTIDE SEQUENCE [LARGE SCALE GENOMIC DNA]</scope>
    <source>
        <strain>SMS-3-5 / SECEC</strain>
    </source>
</reference>
<sequence>MYQDKILVRQLGLQPYEPISLAMHEFTDTRDESTLDEIWLVEHYPVFTQGQAGKAEHILMPGDIPVIQSDRGGQVTYHGPGQQVMYVLLNLKRRKLGVRELVTLLEQTVVNTLAELGIEAHPRADAPGVYVGEKKICSLGLRIRRGCSFHGLALNVNMDLSPFLRINPCGYAGMEMAKISQWKPEATTNNIAPRLLENILALLNNPDFEYITA</sequence>